<reference key="1">
    <citation type="journal article" date="2005" name="J. Bacteriol.">
        <title>Complete genome sequence and analysis of the multiresistant nosocomial pathogen Corynebacterium jeikeium K411, a lipid-requiring bacterium of the human skin flora.</title>
        <authorList>
            <person name="Tauch A."/>
            <person name="Kaiser O."/>
            <person name="Hain T."/>
            <person name="Goesmann A."/>
            <person name="Weisshaar B."/>
            <person name="Albersmeier A."/>
            <person name="Bekel T."/>
            <person name="Bischoff N."/>
            <person name="Brune I."/>
            <person name="Chakraborty T."/>
            <person name="Kalinowski J."/>
            <person name="Meyer F."/>
            <person name="Rupp O."/>
            <person name="Schneiker S."/>
            <person name="Viehoever P."/>
            <person name="Puehler A."/>
        </authorList>
    </citation>
    <scope>NUCLEOTIDE SEQUENCE [LARGE SCALE GENOMIC DNA]</scope>
    <source>
        <strain>K411</strain>
    </source>
</reference>
<accession>Q4JW98</accession>
<proteinExistence type="inferred from homology"/>
<sequence>MLQIFIAGAVAFLVSVFLTPVLIRWFSAEGLGQEIREEGPKSHFKKRGTPTMGGIAVLAGIVFGYLIAVLVGLVTTGAGPGVSGWLVLGLTLALGGLGFADDYIKLVKGRNLGLNAKAKLVGQLVTAIVFGLLILQFPNAHGLTPGSTHLSFVRDIATFDIAIGPAIVGMILFLIFIYLVISAWSNAVNLTDGLDGLASGVTAIVMGTYVLITFWQFRNSCAVSAQAACYAVRDPLDLSMLASAGLGACLGFLWWNAAPAKIFMGDTGSLALGGLVAGLSVTTQTELLMILVGIIFVIEAASVVIQVVSFKATGKRVFRMAPIHHHFENKGWAETTVVIRFWLLAALAAMSGFAVFYAEWLNGASF</sequence>
<keyword id="KW-0131">Cell cycle</keyword>
<keyword id="KW-0132">Cell division</keyword>
<keyword id="KW-1003">Cell membrane</keyword>
<keyword id="KW-0133">Cell shape</keyword>
<keyword id="KW-0961">Cell wall biogenesis/degradation</keyword>
<keyword id="KW-0460">Magnesium</keyword>
<keyword id="KW-0472">Membrane</keyword>
<keyword id="KW-0479">Metal-binding</keyword>
<keyword id="KW-0573">Peptidoglycan synthesis</keyword>
<keyword id="KW-1185">Reference proteome</keyword>
<keyword id="KW-0808">Transferase</keyword>
<keyword id="KW-0812">Transmembrane</keyword>
<keyword id="KW-1133">Transmembrane helix</keyword>
<comment type="function">
    <text evidence="1">Catalyzes the initial step of the lipid cycle reactions in the biosynthesis of the cell wall peptidoglycan: transfers peptidoglycan precursor phospho-MurNAc-pentapeptide from UDP-MurNAc-pentapeptide onto the lipid carrier undecaprenyl phosphate, yielding undecaprenyl-pyrophosphoryl-MurNAc-pentapeptide, known as lipid I.</text>
</comment>
<comment type="catalytic activity">
    <reaction evidence="1">
        <text>UDP-N-acetyl-alpha-D-muramoyl-L-alanyl-gamma-D-glutamyl-meso-2,6-diaminopimeloyl-D-alanyl-D-alanine + di-trans,octa-cis-undecaprenyl phosphate = di-trans,octa-cis-undecaprenyl diphospho-N-acetyl-alpha-D-muramoyl-L-alanyl-D-glutamyl-meso-2,6-diaminopimeloyl-D-alanyl-D-alanine + UMP</text>
        <dbReference type="Rhea" id="RHEA:28386"/>
        <dbReference type="ChEBI" id="CHEBI:57865"/>
        <dbReference type="ChEBI" id="CHEBI:60392"/>
        <dbReference type="ChEBI" id="CHEBI:61386"/>
        <dbReference type="ChEBI" id="CHEBI:61387"/>
        <dbReference type="EC" id="2.7.8.13"/>
    </reaction>
</comment>
<comment type="cofactor">
    <cofactor evidence="1">
        <name>Mg(2+)</name>
        <dbReference type="ChEBI" id="CHEBI:18420"/>
    </cofactor>
</comment>
<comment type="pathway">
    <text evidence="1">Cell wall biogenesis; peptidoglycan biosynthesis.</text>
</comment>
<comment type="subcellular location">
    <subcellularLocation>
        <location evidence="1">Cell membrane</location>
        <topology evidence="1">Multi-pass membrane protein</topology>
    </subcellularLocation>
</comment>
<comment type="similarity">
    <text evidence="1">Belongs to the glycosyltransferase 4 family. MraY subfamily.</text>
</comment>
<name>MRAY_CORJK</name>
<gene>
    <name evidence="1" type="primary">mraY</name>
    <name type="ordered locus">jk0747</name>
</gene>
<protein>
    <recommendedName>
        <fullName evidence="1">Phospho-N-acetylmuramoyl-pentapeptide-transferase</fullName>
        <ecNumber evidence="1">2.7.8.13</ecNumber>
    </recommendedName>
    <alternativeName>
        <fullName evidence="1">UDP-MurNAc-pentapeptide phosphotransferase</fullName>
    </alternativeName>
</protein>
<feature type="chain" id="PRO_0000235449" description="Phospho-N-acetylmuramoyl-pentapeptide-transferase">
    <location>
        <begin position="1"/>
        <end position="366"/>
    </location>
</feature>
<feature type="transmembrane region" description="Helical" evidence="1">
    <location>
        <begin position="3"/>
        <end position="23"/>
    </location>
</feature>
<feature type="transmembrane region" description="Helical" evidence="1">
    <location>
        <begin position="54"/>
        <end position="74"/>
    </location>
</feature>
<feature type="transmembrane region" description="Helical" evidence="1">
    <location>
        <begin position="80"/>
        <end position="100"/>
    </location>
</feature>
<feature type="transmembrane region" description="Helical" evidence="1">
    <location>
        <begin position="120"/>
        <end position="140"/>
    </location>
</feature>
<feature type="transmembrane region" description="Helical" evidence="1">
    <location>
        <begin position="161"/>
        <end position="181"/>
    </location>
</feature>
<feature type="transmembrane region" description="Helical" evidence="1">
    <location>
        <begin position="197"/>
        <end position="217"/>
    </location>
</feature>
<feature type="transmembrane region" description="Helical" evidence="1">
    <location>
        <begin position="238"/>
        <end position="258"/>
    </location>
</feature>
<feature type="transmembrane region" description="Helical" evidence="1">
    <location>
        <begin position="262"/>
        <end position="282"/>
    </location>
</feature>
<feature type="transmembrane region" description="Helical" evidence="1">
    <location>
        <begin position="288"/>
        <end position="308"/>
    </location>
</feature>
<feature type="transmembrane region" description="Helical" evidence="1">
    <location>
        <begin position="341"/>
        <end position="361"/>
    </location>
</feature>
<dbReference type="EC" id="2.7.8.13" evidence="1"/>
<dbReference type="EMBL" id="CR931997">
    <property type="protein sequence ID" value="CAI36909.1"/>
    <property type="molecule type" value="Genomic_DNA"/>
</dbReference>
<dbReference type="RefSeq" id="WP_011273360.1">
    <property type="nucleotide sequence ID" value="NC_007164.1"/>
</dbReference>
<dbReference type="SMR" id="Q4JW98"/>
<dbReference type="STRING" id="306537.jk0747"/>
<dbReference type="KEGG" id="cjk:jk0747"/>
<dbReference type="PATRIC" id="fig|306537.10.peg.755"/>
<dbReference type="eggNOG" id="COG0472">
    <property type="taxonomic scope" value="Bacteria"/>
</dbReference>
<dbReference type="HOGENOM" id="CLU_023982_0_1_11"/>
<dbReference type="OrthoDB" id="9805475at2"/>
<dbReference type="UniPathway" id="UPA00219"/>
<dbReference type="Proteomes" id="UP000000545">
    <property type="component" value="Chromosome"/>
</dbReference>
<dbReference type="GO" id="GO:0005886">
    <property type="term" value="C:plasma membrane"/>
    <property type="evidence" value="ECO:0007669"/>
    <property type="project" value="UniProtKB-SubCell"/>
</dbReference>
<dbReference type="GO" id="GO:0046872">
    <property type="term" value="F:metal ion binding"/>
    <property type="evidence" value="ECO:0007669"/>
    <property type="project" value="UniProtKB-KW"/>
</dbReference>
<dbReference type="GO" id="GO:0008963">
    <property type="term" value="F:phospho-N-acetylmuramoyl-pentapeptide-transferase activity"/>
    <property type="evidence" value="ECO:0007669"/>
    <property type="project" value="UniProtKB-UniRule"/>
</dbReference>
<dbReference type="GO" id="GO:0051992">
    <property type="term" value="F:UDP-N-acetylmuramoyl-L-alanyl-D-glutamyl-meso-2,6-diaminopimelyl-D-alanyl-D-alanine:undecaprenyl-phosphate transferase activity"/>
    <property type="evidence" value="ECO:0007669"/>
    <property type="project" value="RHEA"/>
</dbReference>
<dbReference type="GO" id="GO:0051301">
    <property type="term" value="P:cell division"/>
    <property type="evidence" value="ECO:0007669"/>
    <property type="project" value="UniProtKB-KW"/>
</dbReference>
<dbReference type="GO" id="GO:0071555">
    <property type="term" value="P:cell wall organization"/>
    <property type="evidence" value="ECO:0007669"/>
    <property type="project" value="UniProtKB-KW"/>
</dbReference>
<dbReference type="GO" id="GO:0009252">
    <property type="term" value="P:peptidoglycan biosynthetic process"/>
    <property type="evidence" value="ECO:0007669"/>
    <property type="project" value="UniProtKB-UniRule"/>
</dbReference>
<dbReference type="GO" id="GO:0008360">
    <property type="term" value="P:regulation of cell shape"/>
    <property type="evidence" value="ECO:0007669"/>
    <property type="project" value="UniProtKB-KW"/>
</dbReference>
<dbReference type="CDD" id="cd06852">
    <property type="entry name" value="GT_MraY"/>
    <property type="match status" value="1"/>
</dbReference>
<dbReference type="HAMAP" id="MF_00038">
    <property type="entry name" value="MraY"/>
    <property type="match status" value="1"/>
</dbReference>
<dbReference type="InterPro" id="IPR000715">
    <property type="entry name" value="Glycosyl_transferase_4"/>
</dbReference>
<dbReference type="InterPro" id="IPR003524">
    <property type="entry name" value="PNAcMuramoyl-5peptid_Trfase"/>
</dbReference>
<dbReference type="InterPro" id="IPR018480">
    <property type="entry name" value="PNAcMuramoyl-5peptid_Trfase_CS"/>
</dbReference>
<dbReference type="NCBIfam" id="TIGR00445">
    <property type="entry name" value="mraY"/>
    <property type="match status" value="1"/>
</dbReference>
<dbReference type="PANTHER" id="PTHR22926">
    <property type="entry name" value="PHOSPHO-N-ACETYLMURAMOYL-PENTAPEPTIDE-TRANSFERASE"/>
    <property type="match status" value="1"/>
</dbReference>
<dbReference type="PANTHER" id="PTHR22926:SF5">
    <property type="entry name" value="PHOSPHO-N-ACETYLMURAMOYL-PENTAPEPTIDE-TRANSFERASE HOMOLOG"/>
    <property type="match status" value="1"/>
</dbReference>
<dbReference type="Pfam" id="PF00953">
    <property type="entry name" value="Glycos_transf_4"/>
    <property type="match status" value="1"/>
</dbReference>
<dbReference type="Pfam" id="PF10555">
    <property type="entry name" value="MraY_sig1"/>
    <property type="match status" value="1"/>
</dbReference>
<dbReference type="PROSITE" id="PS01347">
    <property type="entry name" value="MRAY_1"/>
    <property type="match status" value="1"/>
</dbReference>
<dbReference type="PROSITE" id="PS01348">
    <property type="entry name" value="MRAY_2"/>
    <property type="match status" value="1"/>
</dbReference>
<evidence type="ECO:0000255" key="1">
    <source>
        <dbReference type="HAMAP-Rule" id="MF_00038"/>
    </source>
</evidence>
<organism>
    <name type="scientific">Corynebacterium jeikeium (strain K411)</name>
    <dbReference type="NCBI Taxonomy" id="306537"/>
    <lineage>
        <taxon>Bacteria</taxon>
        <taxon>Bacillati</taxon>
        <taxon>Actinomycetota</taxon>
        <taxon>Actinomycetes</taxon>
        <taxon>Mycobacteriales</taxon>
        <taxon>Corynebacteriaceae</taxon>
        <taxon>Corynebacterium</taxon>
    </lineage>
</organism>